<reference key="1">
    <citation type="submission" date="2007-02" db="EMBL/GenBank/DDBJ databases">
        <title>Complete sequence of Mycobacterium sp. JLS.</title>
        <authorList>
            <consortium name="US DOE Joint Genome Institute"/>
            <person name="Copeland A."/>
            <person name="Lucas S."/>
            <person name="Lapidus A."/>
            <person name="Barry K."/>
            <person name="Detter J.C."/>
            <person name="Glavina del Rio T."/>
            <person name="Hammon N."/>
            <person name="Israni S."/>
            <person name="Dalin E."/>
            <person name="Tice H."/>
            <person name="Pitluck S."/>
            <person name="Chain P."/>
            <person name="Malfatti S."/>
            <person name="Shin M."/>
            <person name="Vergez L."/>
            <person name="Schmutz J."/>
            <person name="Larimer F."/>
            <person name="Land M."/>
            <person name="Hauser L."/>
            <person name="Kyrpides N."/>
            <person name="Mikhailova N."/>
            <person name="Miller C.D."/>
            <person name="Anderson A.J."/>
            <person name="Sims R.C."/>
            <person name="Richardson P."/>
        </authorList>
    </citation>
    <scope>NUCLEOTIDE SEQUENCE [LARGE SCALE GENOMIC DNA]</scope>
    <source>
        <strain>JLS</strain>
    </source>
</reference>
<organism>
    <name type="scientific">Mycobacterium sp. (strain JLS)</name>
    <dbReference type="NCBI Taxonomy" id="164757"/>
    <lineage>
        <taxon>Bacteria</taxon>
        <taxon>Bacillati</taxon>
        <taxon>Actinomycetota</taxon>
        <taxon>Actinomycetes</taxon>
        <taxon>Mycobacteriales</taxon>
        <taxon>Mycobacteriaceae</taxon>
        <taxon>Mycobacterium</taxon>
    </lineage>
</organism>
<sequence>MGQKINPHGFRLGITTDWKSRWYADKQYKDYVKEDVAIRRLLATGLERAGIADVEIERTRDRVRVDIHTARPGIVIGRRGTEADRIRADLEKLTKKQVQLNILEVKNPESVAQLVAQGVAEQLSNRVAFRRAMRKAIQSAMRQPNVKGIRVQCSGRLGGAEMSRSEFYREGRVPLHTLRADIDYGLYEAKTTFGRIGVKVWIYKGDIVGGKRELTAAAPAGADRPRRERPSGSRPRRSGASGTTATSTDAGRAASGTQEAPAAAEAAAGTEAAAGAAAETTTQNPGS</sequence>
<evidence type="ECO:0000255" key="1">
    <source>
        <dbReference type="HAMAP-Rule" id="MF_01309"/>
    </source>
</evidence>
<evidence type="ECO:0000256" key="2">
    <source>
        <dbReference type="SAM" id="MobiDB-lite"/>
    </source>
</evidence>
<evidence type="ECO:0000305" key="3"/>
<gene>
    <name evidence="1" type="primary">rpsC</name>
    <name type="ordered locus">Mjls_1046</name>
</gene>
<proteinExistence type="inferred from homology"/>
<protein>
    <recommendedName>
        <fullName evidence="1">Small ribosomal subunit protein uS3</fullName>
    </recommendedName>
    <alternativeName>
        <fullName evidence="3">30S ribosomal protein S3</fullName>
    </alternativeName>
</protein>
<feature type="chain" id="PRO_0000293830" description="Small ribosomal subunit protein uS3">
    <location>
        <begin position="1"/>
        <end position="287"/>
    </location>
</feature>
<feature type="domain" description="KH type-2" evidence="1">
    <location>
        <begin position="38"/>
        <end position="106"/>
    </location>
</feature>
<feature type="region of interest" description="Disordered" evidence="2">
    <location>
        <begin position="216"/>
        <end position="287"/>
    </location>
</feature>
<feature type="compositionally biased region" description="Low complexity" evidence="2">
    <location>
        <begin position="238"/>
        <end position="287"/>
    </location>
</feature>
<comment type="function">
    <text evidence="1">Binds the lower part of the 30S subunit head. Binds mRNA in the 70S ribosome, positioning it for translation.</text>
</comment>
<comment type="subunit">
    <text evidence="1">Part of the 30S ribosomal subunit. Forms a tight complex with proteins S10 and S14.</text>
</comment>
<comment type="similarity">
    <text evidence="1">Belongs to the universal ribosomal protein uS3 family.</text>
</comment>
<accession>A3PVC7</accession>
<keyword id="KW-0687">Ribonucleoprotein</keyword>
<keyword id="KW-0689">Ribosomal protein</keyword>
<keyword id="KW-0694">RNA-binding</keyword>
<keyword id="KW-0699">rRNA-binding</keyword>
<dbReference type="EMBL" id="CP000580">
    <property type="protein sequence ID" value="ABN96854.1"/>
    <property type="molecule type" value="Genomic_DNA"/>
</dbReference>
<dbReference type="SMR" id="A3PVC7"/>
<dbReference type="KEGG" id="mjl:Mjls_1046"/>
<dbReference type="HOGENOM" id="CLU_058591_0_0_11"/>
<dbReference type="BioCyc" id="MSP164757:G1G8C-1059-MONOMER"/>
<dbReference type="GO" id="GO:0022627">
    <property type="term" value="C:cytosolic small ribosomal subunit"/>
    <property type="evidence" value="ECO:0007669"/>
    <property type="project" value="TreeGrafter"/>
</dbReference>
<dbReference type="GO" id="GO:0003729">
    <property type="term" value="F:mRNA binding"/>
    <property type="evidence" value="ECO:0007669"/>
    <property type="project" value="UniProtKB-UniRule"/>
</dbReference>
<dbReference type="GO" id="GO:0019843">
    <property type="term" value="F:rRNA binding"/>
    <property type="evidence" value="ECO:0007669"/>
    <property type="project" value="UniProtKB-UniRule"/>
</dbReference>
<dbReference type="GO" id="GO:0003735">
    <property type="term" value="F:structural constituent of ribosome"/>
    <property type="evidence" value="ECO:0007669"/>
    <property type="project" value="InterPro"/>
</dbReference>
<dbReference type="GO" id="GO:0006412">
    <property type="term" value="P:translation"/>
    <property type="evidence" value="ECO:0007669"/>
    <property type="project" value="UniProtKB-UniRule"/>
</dbReference>
<dbReference type="CDD" id="cd02412">
    <property type="entry name" value="KH-II_30S_S3"/>
    <property type="match status" value="1"/>
</dbReference>
<dbReference type="FunFam" id="3.30.1140.32:FF:000002">
    <property type="entry name" value="30S ribosomal protein S3"/>
    <property type="match status" value="1"/>
</dbReference>
<dbReference type="FunFam" id="3.30.300.20:FF:000001">
    <property type="entry name" value="30S ribosomal protein S3"/>
    <property type="match status" value="1"/>
</dbReference>
<dbReference type="Gene3D" id="3.30.300.20">
    <property type="match status" value="1"/>
</dbReference>
<dbReference type="Gene3D" id="3.30.1140.32">
    <property type="entry name" value="Ribosomal protein S3, C-terminal domain"/>
    <property type="match status" value="1"/>
</dbReference>
<dbReference type="HAMAP" id="MF_01309_B">
    <property type="entry name" value="Ribosomal_uS3_B"/>
    <property type="match status" value="1"/>
</dbReference>
<dbReference type="InterPro" id="IPR004087">
    <property type="entry name" value="KH_dom"/>
</dbReference>
<dbReference type="InterPro" id="IPR015946">
    <property type="entry name" value="KH_dom-like_a/b"/>
</dbReference>
<dbReference type="InterPro" id="IPR004044">
    <property type="entry name" value="KH_dom_type_2"/>
</dbReference>
<dbReference type="InterPro" id="IPR009019">
    <property type="entry name" value="KH_sf_prok-type"/>
</dbReference>
<dbReference type="InterPro" id="IPR036419">
    <property type="entry name" value="Ribosomal_S3_C_sf"/>
</dbReference>
<dbReference type="InterPro" id="IPR005704">
    <property type="entry name" value="Ribosomal_uS3_bac-typ"/>
</dbReference>
<dbReference type="InterPro" id="IPR001351">
    <property type="entry name" value="Ribosomal_uS3_C"/>
</dbReference>
<dbReference type="InterPro" id="IPR018280">
    <property type="entry name" value="Ribosomal_uS3_CS"/>
</dbReference>
<dbReference type="NCBIfam" id="TIGR01009">
    <property type="entry name" value="rpsC_bact"/>
    <property type="match status" value="1"/>
</dbReference>
<dbReference type="PANTHER" id="PTHR11760">
    <property type="entry name" value="30S/40S RIBOSOMAL PROTEIN S3"/>
    <property type="match status" value="1"/>
</dbReference>
<dbReference type="PANTHER" id="PTHR11760:SF19">
    <property type="entry name" value="SMALL RIBOSOMAL SUBUNIT PROTEIN US3C"/>
    <property type="match status" value="1"/>
</dbReference>
<dbReference type="Pfam" id="PF07650">
    <property type="entry name" value="KH_2"/>
    <property type="match status" value="1"/>
</dbReference>
<dbReference type="Pfam" id="PF00189">
    <property type="entry name" value="Ribosomal_S3_C"/>
    <property type="match status" value="1"/>
</dbReference>
<dbReference type="SMART" id="SM00322">
    <property type="entry name" value="KH"/>
    <property type="match status" value="1"/>
</dbReference>
<dbReference type="SUPFAM" id="SSF54814">
    <property type="entry name" value="Prokaryotic type KH domain (KH-domain type II)"/>
    <property type="match status" value="1"/>
</dbReference>
<dbReference type="SUPFAM" id="SSF54821">
    <property type="entry name" value="Ribosomal protein S3 C-terminal domain"/>
    <property type="match status" value="1"/>
</dbReference>
<dbReference type="PROSITE" id="PS50823">
    <property type="entry name" value="KH_TYPE_2"/>
    <property type="match status" value="1"/>
</dbReference>
<dbReference type="PROSITE" id="PS00548">
    <property type="entry name" value="RIBOSOMAL_S3"/>
    <property type="match status" value="1"/>
</dbReference>
<name>RS3_MYCSJ</name>